<keyword id="KW-0963">Cytoplasm</keyword>
<keyword id="KW-0227">DNA damage</keyword>
<keyword id="KW-0233">DNA recombination</keyword>
<keyword id="KW-0234">DNA repair</keyword>
<keyword id="KW-0238">DNA-binding</keyword>
<keyword id="KW-1185">Reference proteome</keyword>
<name>RUVA_BURM1</name>
<dbReference type="EMBL" id="CP000868">
    <property type="protein sequence ID" value="ABX16379.1"/>
    <property type="molecule type" value="Genomic_DNA"/>
</dbReference>
<dbReference type="EMBL" id="AP009385">
    <property type="protein sequence ID" value="BAG42507.1"/>
    <property type="molecule type" value="Genomic_DNA"/>
</dbReference>
<dbReference type="RefSeq" id="WP_006401679.1">
    <property type="nucleotide sequence ID" value="NC_010804.1"/>
</dbReference>
<dbReference type="SMR" id="A9AH72"/>
<dbReference type="STRING" id="395019.BMULJ_00543"/>
<dbReference type="GeneID" id="89568971"/>
<dbReference type="KEGG" id="bmj:BMULJ_00543"/>
<dbReference type="KEGG" id="bmu:Bmul_2695"/>
<dbReference type="eggNOG" id="COG0632">
    <property type="taxonomic scope" value="Bacteria"/>
</dbReference>
<dbReference type="HOGENOM" id="CLU_087936_0_0_4"/>
<dbReference type="Proteomes" id="UP000008815">
    <property type="component" value="Chromosome 1"/>
</dbReference>
<dbReference type="GO" id="GO:0005737">
    <property type="term" value="C:cytoplasm"/>
    <property type="evidence" value="ECO:0007669"/>
    <property type="project" value="UniProtKB-SubCell"/>
</dbReference>
<dbReference type="GO" id="GO:0009379">
    <property type="term" value="C:Holliday junction helicase complex"/>
    <property type="evidence" value="ECO:0007669"/>
    <property type="project" value="InterPro"/>
</dbReference>
<dbReference type="GO" id="GO:0048476">
    <property type="term" value="C:Holliday junction resolvase complex"/>
    <property type="evidence" value="ECO:0007669"/>
    <property type="project" value="UniProtKB-UniRule"/>
</dbReference>
<dbReference type="GO" id="GO:0005524">
    <property type="term" value="F:ATP binding"/>
    <property type="evidence" value="ECO:0007669"/>
    <property type="project" value="InterPro"/>
</dbReference>
<dbReference type="GO" id="GO:0000400">
    <property type="term" value="F:four-way junction DNA binding"/>
    <property type="evidence" value="ECO:0007669"/>
    <property type="project" value="UniProtKB-UniRule"/>
</dbReference>
<dbReference type="GO" id="GO:0009378">
    <property type="term" value="F:four-way junction helicase activity"/>
    <property type="evidence" value="ECO:0007669"/>
    <property type="project" value="InterPro"/>
</dbReference>
<dbReference type="GO" id="GO:0006310">
    <property type="term" value="P:DNA recombination"/>
    <property type="evidence" value="ECO:0007669"/>
    <property type="project" value="UniProtKB-UniRule"/>
</dbReference>
<dbReference type="GO" id="GO:0006281">
    <property type="term" value="P:DNA repair"/>
    <property type="evidence" value="ECO:0007669"/>
    <property type="project" value="UniProtKB-UniRule"/>
</dbReference>
<dbReference type="CDD" id="cd14332">
    <property type="entry name" value="UBA_RuvA_C"/>
    <property type="match status" value="1"/>
</dbReference>
<dbReference type="Gene3D" id="1.10.150.20">
    <property type="entry name" value="5' to 3' exonuclease, C-terminal subdomain"/>
    <property type="match status" value="1"/>
</dbReference>
<dbReference type="Gene3D" id="1.10.8.10">
    <property type="entry name" value="DNA helicase RuvA subunit, C-terminal domain"/>
    <property type="match status" value="1"/>
</dbReference>
<dbReference type="Gene3D" id="2.40.50.140">
    <property type="entry name" value="Nucleic acid-binding proteins"/>
    <property type="match status" value="1"/>
</dbReference>
<dbReference type="HAMAP" id="MF_00031">
    <property type="entry name" value="DNA_HJ_migration_RuvA"/>
    <property type="match status" value="1"/>
</dbReference>
<dbReference type="InterPro" id="IPR013849">
    <property type="entry name" value="DNA_helicase_Holl-junc_RuvA_I"/>
</dbReference>
<dbReference type="InterPro" id="IPR003583">
    <property type="entry name" value="Hlx-hairpin-Hlx_DNA-bd_motif"/>
</dbReference>
<dbReference type="InterPro" id="IPR012340">
    <property type="entry name" value="NA-bd_OB-fold"/>
</dbReference>
<dbReference type="InterPro" id="IPR000085">
    <property type="entry name" value="RuvA"/>
</dbReference>
<dbReference type="InterPro" id="IPR010994">
    <property type="entry name" value="RuvA_2-like"/>
</dbReference>
<dbReference type="InterPro" id="IPR011114">
    <property type="entry name" value="RuvA_C"/>
</dbReference>
<dbReference type="InterPro" id="IPR036267">
    <property type="entry name" value="RuvA_C_sf"/>
</dbReference>
<dbReference type="NCBIfam" id="TIGR00084">
    <property type="entry name" value="ruvA"/>
    <property type="match status" value="1"/>
</dbReference>
<dbReference type="Pfam" id="PF14520">
    <property type="entry name" value="HHH_5"/>
    <property type="match status" value="1"/>
</dbReference>
<dbReference type="Pfam" id="PF07499">
    <property type="entry name" value="RuvA_C"/>
    <property type="match status" value="1"/>
</dbReference>
<dbReference type="Pfam" id="PF01330">
    <property type="entry name" value="RuvA_N"/>
    <property type="match status" value="1"/>
</dbReference>
<dbReference type="SMART" id="SM00278">
    <property type="entry name" value="HhH1"/>
    <property type="match status" value="2"/>
</dbReference>
<dbReference type="SUPFAM" id="SSF46929">
    <property type="entry name" value="DNA helicase RuvA subunit, C-terminal domain"/>
    <property type="match status" value="1"/>
</dbReference>
<dbReference type="SUPFAM" id="SSF50249">
    <property type="entry name" value="Nucleic acid-binding proteins"/>
    <property type="match status" value="1"/>
</dbReference>
<dbReference type="SUPFAM" id="SSF47781">
    <property type="entry name" value="RuvA domain 2-like"/>
    <property type="match status" value="1"/>
</dbReference>
<gene>
    <name evidence="1" type="primary">ruvA</name>
    <name type="ordered locus">Bmul_2695</name>
    <name type="ordered locus">BMULJ_00543</name>
</gene>
<sequence>MIGRIAGILLEKNPPHLLVDCNGVGYEIDVPMSTFYNLPQTGERVVLLTQQIVREDAHLLYGFLTPQERTTFRELLKITGIGARMALAVLSGMSVQELAQAVTMQDAARLTRLPGIGKKTAERLLLELKGKLGADLGALAGAASASDHATDILNALLALGYSEKEGLAAIKNVPAGTGVSEGIKLALKALSKA</sequence>
<protein>
    <recommendedName>
        <fullName evidence="1">Holliday junction branch migration complex subunit RuvA</fullName>
    </recommendedName>
</protein>
<evidence type="ECO:0000255" key="1">
    <source>
        <dbReference type="HAMAP-Rule" id="MF_00031"/>
    </source>
</evidence>
<proteinExistence type="inferred from homology"/>
<reference key="1">
    <citation type="submission" date="2007-10" db="EMBL/GenBank/DDBJ databases">
        <title>Complete sequence of chromosome 1 of Burkholderia multivorans ATCC 17616.</title>
        <authorList>
            <person name="Copeland A."/>
            <person name="Lucas S."/>
            <person name="Lapidus A."/>
            <person name="Barry K."/>
            <person name="Glavina del Rio T."/>
            <person name="Dalin E."/>
            <person name="Tice H."/>
            <person name="Pitluck S."/>
            <person name="Chain P."/>
            <person name="Malfatti S."/>
            <person name="Shin M."/>
            <person name="Vergez L."/>
            <person name="Schmutz J."/>
            <person name="Larimer F."/>
            <person name="Land M."/>
            <person name="Hauser L."/>
            <person name="Kyrpides N."/>
            <person name="Kim E."/>
            <person name="Tiedje J."/>
            <person name="Richardson P."/>
        </authorList>
    </citation>
    <scope>NUCLEOTIDE SEQUENCE [LARGE SCALE GENOMIC DNA]</scope>
    <source>
        <strain>ATCC 17616 / 249</strain>
    </source>
</reference>
<reference key="2">
    <citation type="submission" date="2007-04" db="EMBL/GenBank/DDBJ databases">
        <title>Complete genome sequence of Burkholderia multivorans ATCC 17616.</title>
        <authorList>
            <person name="Ohtsubo Y."/>
            <person name="Yamashita A."/>
            <person name="Kurokawa K."/>
            <person name="Takami H."/>
            <person name="Yuhara S."/>
            <person name="Nishiyama E."/>
            <person name="Endo R."/>
            <person name="Miyazaki R."/>
            <person name="Ono A."/>
            <person name="Yano K."/>
            <person name="Ito M."/>
            <person name="Sota M."/>
            <person name="Yuji N."/>
            <person name="Hattori M."/>
            <person name="Tsuda M."/>
        </authorList>
    </citation>
    <scope>NUCLEOTIDE SEQUENCE [LARGE SCALE GENOMIC DNA]</scope>
    <source>
        <strain>ATCC 17616 / 249</strain>
    </source>
</reference>
<comment type="function">
    <text evidence="1">The RuvA-RuvB-RuvC complex processes Holliday junction (HJ) DNA during genetic recombination and DNA repair, while the RuvA-RuvB complex plays an important role in the rescue of blocked DNA replication forks via replication fork reversal (RFR). RuvA specifically binds to HJ cruciform DNA, conferring on it an open structure. The RuvB hexamer acts as an ATP-dependent pump, pulling dsDNA into and through the RuvAB complex. HJ branch migration allows RuvC to scan DNA until it finds its consensus sequence, where it cleaves and resolves the cruciform DNA.</text>
</comment>
<comment type="subunit">
    <text evidence="1">Homotetramer. Forms an RuvA(8)-RuvB(12)-Holliday junction (HJ) complex. HJ DNA is sandwiched between 2 RuvA tetramers; dsDNA enters through RuvA and exits via RuvB. An RuvB hexamer assembles on each DNA strand where it exits the tetramer. Each RuvB hexamer is contacted by two RuvA subunits (via domain III) on 2 adjacent RuvB subunits; this complex drives branch migration. In the full resolvosome a probable DNA-RuvA(4)-RuvB(12)-RuvC(2) complex forms which resolves the HJ.</text>
</comment>
<comment type="subcellular location">
    <subcellularLocation>
        <location evidence="1">Cytoplasm</location>
    </subcellularLocation>
</comment>
<comment type="domain">
    <text evidence="1">Has three domains with a flexible linker between the domains II and III and assumes an 'L' shape. Domain III is highly mobile and contacts RuvB.</text>
</comment>
<comment type="similarity">
    <text evidence="1">Belongs to the RuvA family.</text>
</comment>
<feature type="chain" id="PRO_1000090292" description="Holliday junction branch migration complex subunit RuvA">
    <location>
        <begin position="1"/>
        <end position="193"/>
    </location>
</feature>
<feature type="region of interest" description="Domain I" evidence="1">
    <location>
        <begin position="1"/>
        <end position="64"/>
    </location>
</feature>
<feature type="region of interest" description="Domain II" evidence="1">
    <location>
        <begin position="65"/>
        <end position="139"/>
    </location>
</feature>
<feature type="region of interest" description="Flexible linker" evidence="1">
    <location>
        <begin position="139"/>
        <end position="143"/>
    </location>
</feature>
<feature type="region of interest" description="Domain III" evidence="1">
    <location>
        <begin position="144"/>
        <end position="193"/>
    </location>
</feature>
<accession>A9AH72</accession>
<organism>
    <name type="scientific">Burkholderia multivorans (strain ATCC 17616 / 249)</name>
    <dbReference type="NCBI Taxonomy" id="395019"/>
    <lineage>
        <taxon>Bacteria</taxon>
        <taxon>Pseudomonadati</taxon>
        <taxon>Pseudomonadota</taxon>
        <taxon>Betaproteobacteria</taxon>
        <taxon>Burkholderiales</taxon>
        <taxon>Burkholderiaceae</taxon>
        <taxon>Burkholderia</taxon>
        <taxon>Burkholderia cepacia complex</taxon>
    </lineage>
</organism>